<proteinExistence type="inferred from homology"/>
<dbReference type="EC" id="2.3.1.181" evidence="1"/>
<dbReference type="EMBL" id="CP000107">
    <property type="protein sequence ID" value="AAZ68674.1"/>
    <property type="molecule type" value="Genomic_DNA"/>
</dbReference>
<dbReference type="RefSeq" id="WP_011304751.1">
    <property type="nucleotide sequence ID" value="NC_007354.1"/>
</dbReference>
<dbReference type="SMR" id="Q3YRI1"/>
<dbReference type="FunCoup" id="Q3YRI1">
    <property type="interactions" value="219"/>
</dbReference>
<dbReference type="STRING" id="269484.Ecaj_0640"/>
<dbReference type="KEGG" id="ecn:Ecaj_0640"/>
<dbReference type="eggNOG" id="COG0321">
    <property type="taxonomic scope" value="Bacteria"/>
</dbReference>
<dbReference type="HOGENOM" id="CLU_035168_3_0_5"/>
<dbReference type="InParanoid" id="Q3YRI1"/>
<dbReference type="UniPathway" id="UPA00538">
    <property type="reaction ID" value="UER00592"/>
</dbReference>
<dbReference type="Proteomes" id="UP000000435">
    <property type="component" value="Chromosome"/>
</dbReference>
<dbReference type="GO" id="GO:0005737">
    <property type="term" value="C:cytoplasm"/>
    <property type="evidence" value="ECO:0007669"/>
    <property type="project" value="UniProtKB-SubCell"/>
</dbReference>
<dbReference type="GO" id="GO:0033819">
    <property type="term" value="F:lipoyl(octanoyl) transferase activity"/>
    <property type="evidence" value="ECO:0007669"/>
    <property type="project" value="UniProtKB-EC"/>
</dbReference>
<dbReference type="GO" id="GO:0036211">
    <property type="term" value="P:protein modification process"/>
    <property type="evidence" value="ECO:0007669"/>
    <property type="project" value="InterPro"/>
</dbReference>
<dbReference type="CDD" id="cd16444">
    <property type="entry name" value="LipB"/>
    <property type="match status" value="1"/>
</dbReference>
<dbReference type="Gene3D" id="3.30.930.10">
    <property type="entry name" value="Bira Bifunctional Protein, Domain 2"/>
    <property type="match status" value="1"/>
</dbReference>
<dbReference type="HAMAP" id="MF_00013">
    <property type="entry name" value="LipB"/>
    <property type="match status" value="1"/>
</dbReference>
<dbReference type="InterPro" id="IPR045864">
    <property type="entry name" value="aa-tRNA-synth_II/BPL/LPL"/>
</dbReference>
<dbReference type="InterPro" id="IPR004143">
    <property type="entry name" value="BPL_LPL_catalytic"/>
</dbReference>
<dbReference type="InterPro" id="IPR000544">
    <property type="entry name" value="Octanoyltransferase"/>
</dbReference>
<dbReference type="InterPro" id="IPR020605">
    <property type="entry name" value="Octanoyltransferase_CS"/>
</dbReference>
<dbReference type="NCBIfam" id="TIGR00214">
    <property type="entry name" value="lipB"/>
    <property type="match status" value="1"/>
</dbReference>
<dbReference type="NCBIfam" id="NF010921">
    <property type="entry name" value="PRK14341.1"/>
    <property type="match status" value="1"/>
</dbReference>
<dbReference type="PANTHER" id="PTHR10993:SF7">
    <property type="entry name" value="LIPOYLTRANSFERASE 2, MITOCHONDRIAL-RELATED"/>
    <property type="match status" value="1"/>
</dbReference>
<dbReference type="PANTHER" id="PTHR10993">
    <property type="entry name" value="OCTANOYLTRANSFERASE"/>
    <property type="match status" value="1"/>
</dbReference>
<dbReference type="Pfam" id="PF21948">
    <property type="entry name" value="LplA-B_cat"/>
    <property type="match status" value="1"/>
</dbReference>
<dbReference type="PIRSF" id="PIRSF016262">
    <property type="entry name" value="LPLase"/>
    <property type="match status" value="1"/>
</dbReference>
<dbReference type="SUPFAM" id="SSF55681">
    <property type="entry name" value="Class II aaRS and biotin synthetases"/>
    <property type="match status" value="1"/>
</dbReference>
<dbReference type="PROSITE" id="PS51733">
    <property type="entry name" value="BPL_LPL_CATALYTIC"/>
    <property type="match status" value="1"/>
</dbReference>
<dbReference type="PROSITE" id="PS01313">
    <property type="entry name" value="LIPB"/>
    <property type="match status" value="1"/>
</dbReference>
<sequence length="214" mass="24450">MSCDLVEWKIESSPIDYQEAVYFMQRKVDSISDGLQKELVWLLEHPALYTAGTGATVEDLLASNLLPVYSTNRGGKYTYHGPGQRIAYVMLNLKTRNKCNVRLYVKTLGDWIINTLSHFSIKSYFNPDLIGVWVTHNGIEKKIAAFGIRIRKWITYHGVSVNIYTDLSHYLGIVPCGIKEYGVTSFKQLGVNVSYEEFDIVLEKKFNEIFSSFN</sequence>
<gene>
    <name evidence="1" type="primary">lipB</name>
    <name type="ordered locus">Ecaj_0640</name>
</gene>
<keyword id="KW-0012">Acyltransferase</keyword>
<keyword id="KW-0963">Cytoplasm</keyword>
<keyword id="KW-0808">Transferase</keyword>
<name>LIPB_EHRCJ</name>
<feature type="chain" id="PRO_0000242718" description="Octanoyltransferase">
    <location>
        <begin position="1"/>
        <end position="214"/>
    </location>
</feature>
<feature type="domain" description="BPL/LPL catalytic" evidence="2">
    <location>
        <begin position="34"/>
        <end position="214"/>
    </location>
</feature>
<feature type="active site" description="Acyl-thioester intermediate" evidence="1">
    <location>
        <position position="176"/>
    </location>
</feature>
<feature type="binding site" evidence="1">
    <location>
        <begin position="73"/>
        <end position="80"/>
    </location>
    <ligand>
        <name>substrate</name>
    </ligand>
</feature>
<feature type="binding site" evidence="1">
    <location>
        <begin position="145"/>
        <end position="147"/>
    </location>
    <ligand>
        <name>substrate</name>
    </ligand>
</feature>
<feature type="binding site" evidence="1">
    <location>
        <begin position="158"/>
        <end position="160"/>
    </location>
    <ligand>
        <name>substrate</name>
    </ligand>
</feature>
<feature type="site" description="Lowers pKa of active site Cys" evidence="1">
    <location>
        <position position="142"/>
    </location>
</feature>
<accession>Q3YRI1</accession>
<comment type="function">
    <text evidence="1">Catalyzes the transfer of endogenously produced octanoic acid from octanoyl-acyl-carrier-protein onto the lipoyl domains of lipoate-dependent enzymes. Lipoyl-ACP can also act as a substrate although octanoyl-ACP is likely to be the physiological substrate.</text>
</comment>
<comment type="catalytic activity">
    <reaction evidence="1">
        <text>octanoyl-[ACP] + L-lysyl-[protein] = N(6)-octanoyl-L-lysyl-[protein] + holo-[ACP] + H(+)</text>
        <dbReference type="Rhea" id="RHEA:17665"/>
        <dbReference type="Rhea" id="RHEA-COMP:9636"/>
        <dbReference type="Rhea" id="RHEA-COMP:9685"/>
        <dbReference type="Rhea" id="RHEA-COMP:9752"/>
        <dbReference type="Rhea" id="RHEA-COMP:9928"/>
        <dbReference type="ChEBI" id="CHEBI:15378"/>
        <dbReference type="ChEBI" id="CHEBI:29969"/>
        <dbReference type="ChEBI" id="CHEBI:64479"/>
        <dbReference type="ChEBI" id="CHEBI:78463"/>
        <dbReference type="ChEBI" id="CHEBI:78809"/>
        <dbReference type="EC" id="2.3.1.181"/>
    </reaction>
</comment>
<comment type="pathway">
    <text evidence="1">Protein modification; protein lipoylation via endogenous pathway; protein N(6)-(lipoyl)lysine from octanoyl-[acyl-carrier-protein]: step 1/2.</text>
</comment>
<comment type="subcellular location">
    <subcellularLocation>
        <location evidence="1">Cytoplasm</location>
    </subcellularLocation>
</comment>
<comment type="miscellaneous">
    <text evidence="1">In the reaction, the free carboxyl group of octanoic acid is attached via an amide linkage to the epsilon-amino group of a specific lysine residue of lipoyl domains of lipoate-dependent enzymes.</text>
</comment>
<comment type="similarity">
    <text evidence="1">Belongs to the LipB family.</text>
</comment>
<reference key="1">
    <citation type="journal article" date="2006" name="J. Bacteriol.">
        <title>The genome of the obligately intracellular bacterium Ehrlichia canis reveals themes of complex membrane structure and immune evasion strategies.</title>
        <authorList>
            <person name="Mavromatis K."/>
            <person name="Doyle C.K."/>
            <person name="Lykidis A."/>
            <person name="Ivanova N."/>
            <person name="Francino M.P."/>
            <person name="Chain P."/>
            <person name="Shin M."/>
            <person name="Malfatti S."/>
            <person name="Larimer F."/>
            <person name="Copeland A."/>
            <person name="Detter J.C."/>
            <person name="Land M."/>
            <person name="Richardson P.M."/>
            <person name="Yu X.J."/>
            <person name="Walker D.H."/>
            <person name="McBride J.W."/>
            <person name="Kyrpides N.C."/>
        </authorList>
    </citation>
    <scope>NUCLEOTIDE SEQUENCE [LARGE SCALE GENOMIC DNA]</scope>
    <source>
        <strain>Jake</strain>
    </source>
</reference>
<evidence type="ECO:0000255" key="1">
    <source>
        <dbReference type="HAMAP-Rule" id="MF_00013"/>
    </source>
</evidence>
<evidence type="ECO:0000255" key="2">
    <source>
        <dbReference type="PROSITE-ProRule" id="PRU01067"/>
    </source>
</evidence>
<protein>
    <recommendedName>
        <fullName evidence="1">Octanoyltransferase</fullName>
        <ecNumber evidence="1">2.3.1.181</ecNumber>
    </recommendedName>
    <alternativeName>
        <fullName evidence="1">Lipoate-protein ligase B</fullName>
    </alternativeName>
    <alternativeName>
        <fullName evidence="1">Lipoyl/octanoyl transferase</fullName>
    </alternativeName>
    <alternativeName>
        <fullName evidence="1">Octanoyl-[acyl-carrier-protein]-protein N-octanoyltransferase</fullName>
    </alternativeName>
</protein>
<organism>
    <name type="scientific">Ehrlichia canis (strain Jake)</name>
    <dbReference type="NCBI Taxonomy" id="269484"/>
    <lineage>
        <taxon>Bacteria</taxon>
        <taxon>Pseudomonadati</taxon>
        <taxon>Pseudomonadota</taxon>
        <taxon>Alphaproteobacteria</taxon>
        <taxon>Rickettsiales</taxon>
        <taxon>Anaplasmataceae</taxon>
        <taxon>Ehrlichia</taxon>
    </lineage>
</organism>